<feature type="chain" id="PRO_1000202776" description="Translation initiation factor IF-2">
    <location>
        <begin position="1"/>
        <end position="686"/>
    </location>
</feature>
<feature type="domain" description="tr-type G">
    <location>
        <begin position="186"/>
        <end position="355"/>
    </location>
</feature>
<feature type="region of interest" description="Disordered" evidence="3">
    <location>
        <begin position="35"/>
        <end position="99"/>
    </location>
</feature>
<feature type="region of interest" description="G1" evidence="1">
    <location>
        <begin position="195"/>
        <end position="202"/>
    </location>
</feature>
<feature type="region of interest" description="G2" evidence="1">
    <location>
        <begin position="220"/>
        <end position="224"/>
    </location>
</feature>
<feature type="region of interest" description="G3" evidence="1">
    <location>
        <begin position="241"/>
        <end position="244"/>
    </location>
</feature>
<feature type="region of interest" description="G4" evidence="1">
    <location>
        <begin position="295"/>
        <end position="298"/>
    </location>
</feature>
<feature type="region of interest" description="G5" evidence="1">
    <location>
        <begin position="331"/>
        <end position="333"/>
    </location>
</feature>
<feature type="compositionally biased region" description="Basic and acidic residues" evidence="3">
    <location>
        <begin position="50"/>
        <end position="68"/>
    </location>
</feature>
<feature type="compositionally biased region" description="Basic residues" evidence="3">
    <location>
        <begin position="69"/>
        <end position="79"/>
    </location>
</feature>
<feature type="compositionally biased region" description="Basic and acidic residues" evidence="3">
    <location>
        <begin position="87"/>
        <end position="99"/>
    </location>
</feature>
<feature type="binding site" evidence="2">
    <location>
        <begin position="195"/>
        <end position="202"/>
    </location>
    <ligand>
        <name>GTP</name>
        <dbReference type="ChEBI" id="CHEBI:37565"/>
    </ligand>
</feature>
<feature type="binding site" evidence="2">
    <location>
        <begin position="241"/>
        <end position="245"/>
    </location>
    <ligand>
        <name>GTP</name>
        <dbReference type="ChEBI" id="CHEBI:37565"/>
    </ligand>
</feature>
<feature type="binding site" evidence="2">
    <location>
        <begin position="295"/>
        <end position="298"/>
    </location>
    <ligand>
        <name>GTP</name>
        <dbReference type="ChEBI" id="CHEBI:37565"/>
    </ligand>
</feature>
<proteinExistence type="inferred from homology"/>
<sequence length="686" mass="75987">MSKIRVYKLAKELGKSSKELVNILNDLGVEVSSHMSTVEDETAELVKGMLQEEDKPEEKISKKEPDKKDRKKTKGKKQMTRTATQKEGTEHGQKDTDRREMRVTVNPPLSVKELAEKADIPVNRIIKTLIGLGVMATVNHQIDEEIVKKLIDKMNLKIKISQGEDKEEKPDKVQTDIKDKPEDLELRPPIVTVMGHVDHGKTTLLDVIRETRVAESEAGGITQHIGAYQAVVQNKKITFIDTPGHEAFTAMRARGARLTDIAILVVAADDGVMPQTVEAINHAKAADIPIIVAINKVDKSNAQPDMVKQQLTEHGLVPEDWGGDTICVPISALKKKNIDELLEMVLLVAEMEELKANPDRPAEGVIVESQLDKGRGPVATVLVKNGTLKVGDPILAGYTHGKVRAMINDQGKRIKEALPSTPVEVLGFSDVPAAGDYVQVLEDEKEARAIAEERLQKKQERDLQHDGRISLDGLYQQIKEGGVKELNLIIKGDVHGSIEALRESLVKLSTDEVTVNIIHTGVGAINETDVNLASASNAIIIGFNVRPDSNARKLAEREKVEIKTYRVIYKIIEDLKDAMAGMLEPELKEEVTGRAEVRATFKVPNVGTVAGLYVKEGFINRNNKVRLLRDGVVVYEGDIASLKRFKNDVREVKEGYECGLGIEGYNDIKEGDQIETYTYREIKRTL</sequence>
<organism>
    <name type="scientific">Halothermothrix orenii (strain H 168 / OCM 544 / DSM 9562)</name>
    <dbReference type="NCBI Taxonomy" id="373903"/>
    <lineage>
        <taxon>Bacteria</taxon>
        <taxon>Bacillati</taxon>
        <taxon>Bacillota</taxon>
        <taxon>Clostridia</taxon>
        <taxon>Halanaerobiales</taxon>
        <taxon>Halothermotrichaceae</taxon>
        <taxon>Halothermothrix</taxon>
    </lineage>
</organism>
<accession>B8CW72</accession>
<evidence type="ECO:0000250" key="1"/>
<evidence type="ECO:0000255" key="2">
    <source>
        <dbReference type="HAMAP-Rule" id="MF_00100"/>
    </source>
</evidence>
<evidence type="ECO:0000256" key="3">
    <source>
        <dbReference type="SAM" id="MobiDB-lite"/>
    </source>
</evidence>
<protein>
    <recommendedName>
        <fullName evidence="2">Translation initiation factor IF-2</fullName>
    </recommendedName>
</protein>
<gene>
    <name evidence="2" type="primary">infB</name>
    <name type="ordered locus">Hore_07840</name>
</gene>
<comment type="function">
    <text evidence="2">One of the essential components for the initiation of protein synthesis. Protects formylmethionyl-tRNA from spontaneous hydrolysis and promotes its binding to the 30S ribosomal subunits. Also involved in the hydrolysis of GTP during the formation of the 70S ribosomal complex.</text>
</comment>
<comment type="subcellular location">
    <subcellularLocation>
        <location evidence="2">Cytoplasm</location>
    </subcellularLocation>
</comment>
<comment type="similarity">
    <text evidence="2">Belongs to the TRAFAC class translation factor GTPase superfamily. Classic translation factor GTPase family. IF-2 subfamily.</text>
</comment>
<dbReference type="EMBL" id="CP001098">
    <property type="protein sequence ID" value="ACL69541.1"/>
    <property type="molecule type" value="Genomic_DNA"/>
</dbReference>
<dbReference type="RefSeq" id="WP_012635729.1">
    <property type="nucleotide sequence ID" value="NC_011899.1"/>
</dbReference>
<dbReference type="SMR" id="B8CW72"/>
<dbReference type="STRING" id="373903.Hore_07840"/>
<dbReference type="KEGG" id="hor:Hore_07840"/>
<dbReference type="eggNOG" id="COG0532">
    <property type="taxonomic scope" value="Bacteria"/>
</dbReference>
<dbReference type="HOGENOM" id="CLU_006301_5_1_9"/>
<dbReference type="OrthoDB" id="9811804at2"/>
<dbReference type="Proteomes" id="UP000000719">
    <property type="component" value="Chromosome"/>
</dbReference>
<dbReference type="GO" id="GO:0005829">
    <property type="term" value="C:cytosol"/>
    <property type="evidence" value="ECO:0007669"/>
    <property type="project" value="TreeGrafter"/>
</dbReference>
<dbReference type="GO" id="GO:0005525">
    <property type="term" value="F:GTP binding"/>
    <property type="evidence" value="ECO:0007669"/>
    <property type="project" value="UniProtKB-KW"/>
</dbReference>
<dbReference type="GO" id="GO:0003924">
    <property type="term" value="F:GTPase activity"/>
    <property type="evidence" value="ECO:0007669"/>
    <property type="project" value="UniProtKB-UniRule"/>
</dbReference>
<dbReference type="GO" id="GO:0003743">
    <property type="term" value="F:translation initiation factor activity"/>
    <property type="evidence" value="ECO:0007669"/>
    <property type="project" value="UniProtKB-UniRule"/>
</dbReference>
<dbReference type="CDD" id="cd01887">
    <property type="entry name" value="IF2_eIF5B"/>
    <property type="match status" value="1"/>
</dbReference>
<dbReference type="CDD" id="cd03702">
    <property type="entry name" value="IF2_mtIF2_II"/>
    <property type="match status" value="1"/>
</dbReference>
<dbReference type="CDD" id="cd03692">
    <property type="entry name" value="mtIF2_IVc"/>
    <property type="match status" value="1"/>
</dbReference>
<dbReference type="FunFam" id="2.40.30.10:FF:000007">
    <property type="entry name" value="Translation initiation factor IF-2"/>
    <property type="match status" value="1"/>
</dbReference>
<dbReference type="FunFam" id="2.40.30.10:FF:000008">
    <property type="entry name" value="Translation initiation factor IF-2"/>
    <property type="match status" value="1"/>
</dbReference>
<dbReference type="FunFam" id="3.40.50.10050:FF:000001">
    <property type="entry name" value="Translation initiation factor IF-2"/>
    <property type="match status" value="1"/>
</dbReference>
<dbReference type="FunFam" id="3.40.50.300:FF:000019">
    <property type="entry name" value="Translation initiation factor IF-2"/>
    <property type="match status" value="1"/>
</dbReference>
<dbReference type="Gene3D" id="1.10.10.2480">
    <property type="match status" value="1"/>
</dbReference>
<dbReference type="Gene3D" id="3.40.50.300">
    <property type="entry name" value="P-loop containing nucleotide triphosphate hydrolases"/>
    <property type="match status" value="1"/>
</dbReference>
<dbReference type="Gene3D" id="2.40.30.10">
    <property type="entry name" value="Translation factors"/>
    <property type="match status" value="2"/>
</dbReference>
<dbReference type="Gene3D" id="3.40.50.10050">
    <property type="entry name" value="Translation initiation factor IF- 2, domain 3"/>
    <property type="match status" value="1"/>
</dbReference>
<dbReference type="HAMAP" id="MF_00100_B">
    <property type="entry name" value="IF_2_B"/>
    <property type="match status" value="1"/>
</dbReference>
<dbReference type="InterPro" id="IPR053905">
    <property type="entry name" value="EF-G-like_DII"/>
</dbReference>
<dbReference type="InterPro" id="IPR004161">
    <property type="entry name" value="EFTu-like_2"/>
</dbReference>
<dbReference type="InterPro" id="IPR044145">
    <property type="entry name" value="IF2_II"/>
</dbReference>
<dbReference type="InterPro" id="IPR006847">
    <property type="entry name" value="IF2_N"/>
</dbReference>
<dbReference type="InterPro" id="IPR027417">
    <property type="entry name" value="P-loop_NTPase"/>
</dbReference>
<dbReference type="InterPro" id="IPR005225">
    <property type="entry name" value="Small_GTP-bd"/>
</dbReference>
<dbReference type="InterPro" id="IPR000795">
    <property type="entry name" value="T_Tr_GTP-bd_dom"/>
</dbReference>
<dbReference type="InterPro" id="IPR000178">
    <property type="entry name" value="TF_IF2_bacterial-like"/>
</dbReference>
<dbReference type="InterPro" id="IPR015760">
    <property type="entry name" value="TIF_IF2"/>
</dbReference>
<dbReference type="InterPro" id="IPR023115">
    <property type="entry name" value="TIF_IF2_dom3"/>
</dbReference>
<dbReference type="InterPro" id="IPR036925">
    <property type="entry name" value="TIF_IF2_dom3_sf"/>
</dbReference>
<dbReference type="InterPro" id="IPR009000">
    <property type="entry name" value="Transl_B-barrel_sf"/>
</dbReference>
<dbReference type="NCBIfam" id="TIGR00487">
    <property type="entry name" value="IF-2"/>
    <property type="match status" value="1"/>
</dbReference>
<dbReference type="NCBIfam" id="TIGR00231">
    <property type="entry name" value="small_GTP"/>
    <property type="match status" value="1"/>
</dbReference>
<dbReference type="PANTHER" id="PTHR43381:SF5">
    <property type="entry name" value="TR-TYPE G DOMAIN-CONTAINING PROTEIN"/>
    <property type="match status" value="1"/>
</dbReference>
<dbReference type="PANTHER" id="PTHR43381">
    <property type="entry name" value="TRANSLATION INITIATION FACTOR IF-2-RELATED"/>
    <property type="match status" value="1"/>
</dbReference>
<dbReference type="Pfam" id="PF22042">
    <property type="entry name" value="EF-G_D2"/>
    <property type="match status" value="1"/>
</dbReference>
<dbReference type="Pfam" id="PF00009">
    <property type="entry name" value="GTP_EFTU"/>
    <property type="match status" value="1"/>
</dbReference>
<dbReference type="Pfam" id="PF03144">
    <property type="entry name" value="GTP_EFTU_D2"/>
    <property type="match status" value="1"/>
</dbReference>
<dbReference type="Pfam" id="PF11987">
    <property type="entry name" value="IF-2"/>
    <property type="match status" value="1"/>
</dbReference>
<dbReference type="Pfam" id="PF04760">
    <property type="entry name" value="IF2_N"/>
    <property type="match status" value="2"/>
</dbReference>
<dbReference type="SUPFAM" id="SSF52156">
    <property type="entry name" value="Initiation factor IF2/eIF5b, domain 3"/>
    <property type="match status" value="1"/>
</dbReference>
<dbReference type="SUPFAM" id="SSF52540">
    <property type="entry name" value="P-loop containing nucleoside triphosphate hydrolases"/>
    <property type="match status" value="1"/>
</dbReference>
<dbReference type="SUPFAM" id="SSF50447">
    <property type="entry name" value="Translation proteins"/>
    <property type="match status" value="2"/>
</dbReference>
<dbReference type="PROSITE" id="PS51722">
    <property type="entry name" value="G_TR_2"/>
    <property type="match status" value="1"/>
</dbReference>
<dbReference type="PROSITE" id="PS01176">
    <property type="entry name" value="IF2"/>
    <property type="match status" value="1"/>
</dbReference>
<name>IF2_HALOH</name>
<reference key="1">
    <citation type="journal article" date="2009" name="PLoS ONE">
        <title>Genome analysis of the anaerobic thermohalophilic bacterium Halothermothrix orenii.</title>
        <authorList>
            <person name="Mavromatis K."/>
            <person name="Ivanova N."/>
            <person name="Anderson I."/>
            <person name="Lykidis A."/>
            <person name="Hooper S.D."/>
            <person name="Sun H."/>
            <person name="Kunin V."/>
            <person name="Lapidus A."/>
            <person name="Hugenholtz P."/>
            <person name="Patel B."/>
            <person name="Kyrpides N.C."/>
        </authorList>
    </citation>
    <scope>NUCLEOTIDE SEQUENCE [LARGE SCALE GENOMIC DNA]</scope>
    <source>
        <strain>H 168 / OCM 544 / DSM 9562</strain>
    </source>
</reference>
<keyword id="KW-0963">Cytoplasm</keyword>
<keyword id="KW-0342">GTP-binding</keyword>
<keyword id="KW-0396">Initiation factor</keyword>
<keyword id="KW-0547">Nucleotide-binding</keyword>
<keyword id="KW-0648">Protein biosynthesis</keyword>
<keyword id="KW-1185">Reference proteome</keyword>